<keyword id="KW-0046">Antibiotic resistance</keyword>
<keyword id="KW-1015">Disulfide bond</keyword>
<keyword id="KW-0378">Hydrolase</keyword>
<keyword id="KW-0732">Signal</keyword>
<keyword id="KW-0814">Transposable element</keyword>
<sequence length="288" mass="31314">MKFLLAFSLLIPSVVFASSSKFQQVEQDVKAIEVSLSARIGVSVLDTQNGEYWDYNGNQRFPLTSTFKTIACAKLLYDAEQGKVNPNSTVEIKKADLVTYSPVIEKQVGQAITLDDACFATMTTSDNTAANIILSAVGGPKGVTDFLRQIGDKETRLDRIEPDLNEGKLGDLRDTTTPKAIASTLNKLLFGSALSEMNQKKLESWMVNNQVTGNLLRSVLPAGWNIADRSGAGGFGARSITAVVWSEHQAPIIVSIYLAQTQASMAERNDAIVKIGHSIFDVYTSQSR</sequence>
<gene>
    <name type="primary">carB3</name>
</gene>
<organism>
    <name type="scientific">Pseudomonas aeruginosa</name>
    <dbReference type="NCBI Taxonomy" id="287"/>
    <lineage>
        <taxon>Bacteria</taxon>
        <taxon>Pseudomonadati</taxon>
        <taxon>Pseudomonadota</taxon>
        <taxon>Gammaproteobacteria</taxon>
        <taxon>Pseudomonadales</taxon>
        <taxon>Pseudomonadaceae</taxon>
        <taxon>Pseudomonas</taxon>
    </lineage>
</organism>
<protein>
    <recommendedName>
        <fullName>Beta-lactamase CARB-3</fullName>
        <ecNumber>3.5.2.6</ecNumber>
    </recommendedName>
    <alternativeName>
        <fullName>Carbenicillinase 3</fullName>
    </alternativeName>
</protein>
<name>BLC3_PSEAI</name>
<accession>P37322</accession>
<proteinExistence type="inferred from homology"/>
<dbReference type="EC" id="3.5.2.6"/>
<dbReference type="EMBL" id="S46063">
    <property type="protein sequence ID" value="AAB19430.2"/>
    <property type="status" value="ALT_INIT"/>
    <property type="molecule type" value="Genomic_DNA"/>
</dbReference>
<dbReference type="PIR" id="JQ1136">
    <property type="entry name" value="JQ1136"/>
</dbReference>
<dbReference type="RefSeq" id="WP_063859105.1">
    <property type="nucleotide sequence ID" value="NG_048733.1"/>
</dbReference>
<dbReference type="BMRB" id="P37322"/>
<dbReference type="SMR" id="P37322"/>
<dbReference type="KEGG" id="ag:AAB19430"/>
<dbReference type="GO" id="GO:0008800">
    <property type="term" value="F:beta-lactamase activity"/>
    <property type="evidence" value="ECO:0007669"/>
    <property type="project" value="UniProtKB-EC"/>
</dbReference>
<dbReference type="GO" id="GO:0030655">
    <property type="term" value="P:beta-lactam antibiotic catabolic process"/>
    <property type="evidence" value="ECO:0007669"/>
    <property type="project" value="InterPro"/>
</dbReference>
<dbReference type="GO" id="GO:0046677">
    <property type="term" value="P:response to antibiotic"/>
    <property type="evidence" value="ECO:0007669"/>
    <property type="project" value="UniProtKB-KW"/>
</dbReference>
<dbReference type="Gene3D" id="3.40.710.10">
    <property type="entry name" value="DD-peptidase/beta-lactamase superfamily"/>
    <property type="match status" value="1"/>
</dbReference>
<dbReference type="InterPro" id="IPR012338">
    <property type="entry name" value="Beta-lactam/transpept-like"/>
</dbReference>
<dbReference type="InterPro" id="IPR045155">
    <property type="entry name" value="Beta-lactam_cat"/>
</dbReference>
<dbReference type="InterPro" id="IPR000871">
    <property type="entry name" value="Beta-lactam_class-A"/>
</dbReference>
<dbReference type="InterPro" id="IPR023650">
    <property type="entry name" value="Beta-lactam_class-A_AS"/>
</dbReference>
<dbReference type="NCBIfam" id="NF033103">
    <property type="entry name" value="bla_class_A"/>
    <property type="match status" value="1"/>
</dbReference>
<dbReference type="NCBIfam" id="NF000481">
    <property type="entry name" value="carbeni_gen"/>
    <property type="match status" value="1"/>
</dbReference>
<dbReference type="NCBIfam" id="NF000480">
    <property type="entry name" value="PSE"/>
    <property type="match status" value="1"/>
</dbReference>
<dbReference type="PANTHER" id="PTHR35333">
    <property type="entry name" value="BETA-LACTAMASE"/>
    <property type="match status" value="1"/>
</dbReference>
<dbReference type="PANTHER" id="PTHR35333:SF3">
    <property type="entry name" value="BETA-LACTAMASE-TYPE TRANSPEPTIDASE FOLD CONTAINING PROTEIN"/>
    <property type="match status" value="1"/>
</dbReference>
<dbReference type="Pfam" id="PF13354">
    <property type="entry name" value="Beta-lactamase2"/>
    <property type="match status" value="1"/>
</dbReference>
<dbReference type="PRINTS" id="PR00118">
    <property type="entry name" value="BLACTAMASEA"/>
</dbReference>
<dbReference type="SUPFAM" id="SSF56601">
    <property type="entry name" value="beta-lactamase/transpeptidase-like"/>
    <property type="match status" value="1"/>
</dbReference>
<dbReference type="PROSITE" id="PS00146">
    <property type="entry name" value="BETA_LACTAMASE_A"/>
    <property type="match status" value="1"/>
</dbReference>
<feature type="signal peptide" evidence="2">
    <location>
        <begin position="1"/>
        <end position="17"/>
    </location>
</feature>
<feature type="chain" id="PRO_0000017043" description="Beta-lactamase CARB-3">
    <location>
        <begin position="18"/>
        <end position="288"/>
    </location>
</feature>
<feature type="active site" description="Acyl-ester intermediate" evidence="3">
    <location>
        <position position="65"/>
    </location>
</feature>
<feature type="binding site" evidence="1">
    <location>
        <begin position="229"/>
        <end position="231"/>
    </location>
    <ligand>
        <name>substrate</name>
    </ligand>
</feature>
<feature type="disulfide bond" evidence="1">
    <location>
        <begin position="72"/>
        <end position="118"/>
    </location>
</feature>
<comment type="function">
    <text>Hydrolyzes both carbenicillin and oxacillin.</text>
</comment>
<comment type="catalytic activity">
    <reaction evidence="3">
        <text>a beta-lactam + H2O = a substituted beta-amino acid</text>
        <dbReference type="Rhea" id="RHEA:20401"/>
        <dbReference type="ChEBI" id="CHEBI:15377"/>
        <dbReference type="ChEBI" id="CHEBI:35627"/>
        <dbReference type="ChEBI" id="CHEBI:140347"/>
        <dbReference type="EC" id="3.5.2.6"/>
    </reaction>
</comment>
<comment type="miscellaneous">
    <text evidence="5">The class A beta-lactamase family has a specific amino-acid numbering system, sometimes called Ambler or ABL numbering and often misspelt as Amber. A multiple sequence alignment was used to derive a consensus sequence and then the consensus was numbered taking into account insertions and deletions. This allows use of identical numbers, e.g. for active site residues, despite differences in protein length. UniProt always uses natural numbering of residues, hence there appear to be differences in numbering between this entry and some papers.</text>
</comment>
<comment type="similarity">
    <text evidence="4">Belongs to the class-A beta-lactamase family.</text>
</comment>
<comment type="sequence caution" evidence="4">
    <conflict type="erroneous initiation">
        <sequence resource="EMBL-CDS" id="AAB19430"/>
    </conflict>
</comment>
<reference key="1">
    <citation type="journal article" date="1991" name="Gene">
        <title>Characterization of the blaCARB-3 gene encoding the carbenicillinase-3 beta-lactamase of Pseudomonas aeruginosa.</title>
        <authorList>
            <person name="Lachapelle J."/>
            <person name="Dufresne J."/>
            <person name="Levesque R.C."/>
        </authorList>
    </citation>
    <scope>NUCLEOTIDE SEQUENCE [GENOMIC DNA]</scope>
    <source>
        <strain>Cilote</strain>
        <transposon>Tn1408</transposon>
    </source>
</reference>
<reference key="2">
    <citation type="journal article" date="1991" name="Biochem. J.">
        <title>A standard numbering scheme for the class A beta-lactamases.</title>
        <authorList>
            <person name="Ambler R.P."/>
            <person name="Coulson A.F."/>
            <person name="Frere J.M."/>
            <person name="Ghuysen J.M."/>
            <person name="Joris B."/>
            <person name="Forsman M."/>
            <person name="Levesque R.C."/>
            <person name="Tiraby G."/>
            <person name="Waley S.G."/>
        </authorList>
    </citation>
    <scope>AMINO ACID NUMBERING SCHEME</scope>
</reference>
<evidence type="ECO:0000250" key="1"/>
<evidence type="ECO:0000255" key="2"/>
<evidence type="ECO:0000255" key="3">
    <source>
        <dbReference type="PROSITE-ProRule" id="PRU10101"/>
    </source>
</evidence>
<evidence type="ECO:0000305" key="4"/>
<evidence type="ECO:0000305" key="5">
    <source>
    </source>
</evidence>